<comment type="function">
    <text evidence="1">Part of the ABC transporter complex FbpABC involved in Fe(3+) ions import. Responsible for energy coupling to the transport system.</text>
</comment>
<comment type="catalytic activity">
    <reaction evidence="1">
        <text>Fe(3+)(out) + ATP + H2O = Fe(3+)(in) + ADP + phosphate + H(+)</text>
        <dbReference type="Rhea" id="RHEA:12332"/>
        <dbReference type="ChEBI" id="CHEBI:15377"/>
        <dbReference type="ChEBI" id="CHEBI:15378"/>
        <dbReference type="ChEBI" id="CHEBI:29034"/>
        <dbReference type="ChEBI" id="CHEBI:30616"/>
        <dbReference type="ChEBI" id="CHEBI:43474"/>
        <dbReference type="ChEBI" id="CHEBI:456216"/>
        <dbReference type="EC" id="7.2.2.7"/>
    </reaction>
</comment>
<comment type="subunit">
    <text evidence="1">The complex is composed of two ATP-binding proteins (FbpC), two transmembrane proteins (FbpB) and a solute-binding protein (FbpA).</text>
</comment>
<comment type="subcellular location">
    <subcellularLocation>
        <location evidence="1">Cell inner membrane</location>
        <topology evidence="1">Peripheral membrane protein</topology>
    </subcellularLocation>
</comment>
<comment type="similarity">
    <text evidence="1">Belongs to the ABC transporter superfamily. Fe(3+) ion importer (TC 3.A.1.10) family.</text>
</comment>
<dbReference type="EC" id="7.2.2.7" evidence="1"/>
<dbReference type="EMBL" id="CP000133">
    <property type="protein sequence ID" value="ABC90908.1"/>
    <property type="molecule type" value="Genomic_DNA"/>
</dbReference>
<dbReference type="RefSeq" id="WP_011425390.1">
    <property type="nucleotide sequence ID" value="NC_007761.1"/>
</dbReference>
<dbReference type="SMR" id="Q2K8C8"/>
<dbReference type="KEGG" id="ret:RHE_CH02124"/>
<dbReference type="eggNOG" id="COG3842">
    <property type="taxonomic scope" value="Bacteria"/>
</dbReference>
<dbReference type="HOGENOM" id="CLU_000604_1_1_5"/>
<dbReference type="OrthoDB" id="9802264at2"/>
<dbReference type="Proteomes" id="UP000001936">
    <property type="component" value="Chromosome"/>
</dbReference>
<dbReference type="GO" id="GO:0043190">
    <property type="term" value="C:ATP-binding cassette (ABC) transporter complex"/>
    <property type="evidence" value="ECO:0007669"/>
    <property type="project" value="InterPro"/>
</dbReference>
<dbReference type="GO" id="GO:0015408">
    <property type="term" value="F:ABC-type ferric iron transporter activity"/>
    <property type="evidence" value="ECO:0007669"/>
    <property type="project" value="UniProtKB-EC"/>
</dbReference>
<dbReference type="GO" id="GO:0005524">
    <property type="term" value="F:ATP binding"/>
    <property type="evidence" value="ECO:0007669"/>
    <property type="project" value="UniProtKB-KW"/>
</dbReference>
<dbReference type="GO" id="GO:0016887">
    <property type="term" value="F:ATP hydrolysis activity"/>
    <property type="evidence" value="ECO:0007669"/>
    <property type="project" value="InterPro"/>
</dbReference>
<dbReference type="FunFam" id="3.40.50.300:FF:000425">
    <property type="entry name" value="Probable ABC transporter, ATP-binding subunit"/>
    <property type="match status" value="1"/>
</dbReference>
<dbReference type="Gene3D" id="2.40.50.100">
    <property type="match status" value="1"/>
</dbReference>
<dbReference type="Gene3D" id="3.40.50.300">
    <property type="entry name" value="P-loop containing nucleotide triphosphate hydrolases"/>
    <property type="match status" value="1"/>
</dbReference>
<dbReference type="InterPro" id="IPR003593">
    <property type="entry name" value="AAA+_ATPase"/>
</dbReference>
<dbReference type="InterPro" id="IPR050093">
    <property type="entry name" value="ABC_SmlMolc_Importer"/>
</dbReference>
<dbReference type="InterPro" id="IPR003439">
    <property type="entry name" value="ABC_transporter-like_ATP-bd"/>
</dbReference>
<dbReference type="InterPro" id="IPR017871">
    <property type="entry name" value="ABC_transporter-like_CS"/>
</dbReference>
<dbReference type="InterPro" id="IPR008995">
    <property type="entry name" value="Mo/tungstate-bd_C_term_dom"/>
</dbReference>
<dbReference type="InterPro" id="IPR027417">
    <property type="entry name" value="P-loop_NTPase"/>
</dbReference>
<dbReference type="InterPro" id="IPR013611">
    <property type="entry name" value="Transp-assoc_OB_typ2"/>
</dbReference>
<dbReference type="PANTHER" id="PTHR42781">
    <property type="entry name" value="SPERMIDINE/PUTRESCINE IMPORT ATP-BINDING PROTEIN POTA"/>
    <property type="match status" value="1"/>
</dbReference>
<dbReference type="PANTHER" id="PTHR42781:SF4">
    <property type="entry name" value="SPERMIDINE_PUTRESCINE IMPORT ATP-BINDING PROTEIN POTA"/>
    <property type="match status" value="1"/>
</dbReference>
<dbReference type="Pfam" id="PF00005">
    <property type="entry name" value="ABC_tran"/>
    <property type="match status" value="1"/>
</dbReference>
<dbReference type="Pfam" id="PF08402">
    <property type="entry name" value="TOBE_2"/>
    <property type="match status" value="1"/>
</dbReference>
<dbReference type="SMART" id="SM00382">
    <property type="entry name" value="AAA"/>
    <property type="match status" value="1"/>
</dbReference>
<dbReference type="SUPFAM" id="SSF50331">
    <property type="entry name" value="MOP-like"/>
    <property type="match status" value="1"/>
</dbReference>
<dbReference type="SUPFAM" id="SSF52540">
    <property type="entry name" value="P-loop containing nucleoside triphosphate hydrolases"/>
    <property type="match status" value="1"/>
</dbReference>
<dbReference type="PROSITE" id="PS00211">
    <property type="entry name" value="ABC_TRANSPORTER_1"/>
    <property type="match status" value="1"/>
</dbReference>
<dbReference type="PROSITE" id="PS50893">
    <property type="entry name" value="ABC_TRANSPORTER_2"/>
    <property type="match status" value="1"/>
</dbReference>
<dbReference type="PROSITE" id="PS51242">
    <property type="entry name" value="FBPC"/>
    <property type="match status" value="1"/>
</dbReference>
<keyword id="KW-0067">ATP-binding</keyword>
<keyword id="KW-0997">Cell inner membrane</keyword>
<keyword id="KW-1003">Cell membrane</keyword>
<keyword id="KW-0406">Ion transport</keyword>
<keyword id="KW-0408">Iron</keyword>
<keyword id="KW-0410">Iron transport</keyword>
<keyword id="KW-0472">Membrane</keyword>
<keyword id="KW-0547">Nucleotide-binding</keyword>
<keyword id="KW-1185">Reference proteome</keyword>
<keyword id="KW-1278">Translocase</keyword>
<keyword id="KW-0813">Transport</keyword>
<sequence length="353" mass="37652">MITVKPGCVTFQNVRKSFGAFTAIPDLSLSIEPGTLVTLLGPSGCGKTTTLRMLAGLEHPTSGRILIGGADVTMLPANERDVSMVFQSYALFPHMTSLDNVAYGLQSSGLGKKEAREKAEEGLKLVGLAGMGHRLPAELSGGQQQRVAVARALVLEPQVLLLDEPLSNLDARLRRRVRTEIRELQQRLGFTAVYVTHDQDEALAVSDRIIVMKDGEIAQSGTPRELYEAPASSFIADFMGEANVIPCEVIGVEGTEALIRVAGVDHRLPGRNAKAGMAKLAVRPGSITIAAAGQQGLAGRVLHSAYLGGHVEYEVETDVGTLFIIDHAVERNLPPSSDVTLGFENRGIALINA</sequence>
<evidence type="ECO:0000255" key="1">
    <source>
        <dbReference type="HAMAP-Rule" id="MF_01706"/>
    </source>
</evidence>
<protein>
    <recommendedName>
        <fullName evidence="1">Fe(3+) ions import ATP-binding protein FbpC</fullName>
        <ecNumber evidence="1">7.2.2.7</ecNumber>
    </recommendedName>
</protein>
<name>FBPC_RHIEC</name>
<accession>Q2K8C8</accession>
<feature type="chain" id="PRO_0000272044" description="Fe(3+) ions import ATP-binding protein FbpC">
    <location>
        <begin position="1"/>
        <end position="353"/>
    </location>
</feature>
<feature type="domain" description="ABC transporter" evidence="1">
    <location>
        <begin position="9"/>
        <end position="239"/>
    </location>
</feature>
<feature type="binding site" evidence="1">
    <location>
        <begin position="41"/>
        <end position="48"/>
    </location>
    <ligand>
        <name>ATP</name>
        <dbReference type="ChEBI" id="CHEBI:30616"/>
    </ligand>
</feature>
<proteinExistence type="inferred from homology"/>
<reference key="1">
    <citation type="journal article" date="2006" name="Proc. Natl. Acad. Sci. U.S.A.">
        <title>The partitioned Rhizobium etli genome: genetic and metabolic redundancy in seven interacting replicons.</title>
        <authorList>
            <person name="Gonzalez V."/>
            <person name="Santamaria R.I."/>
            <person name="Bustos P."/>
            <person name="Hernandez-Gonzalez I."/>
            <person name="Medrano-Soto A."/>
            <person name="Moreno-Hagelsieb G."/>
            <person name="Janga S.C."/>
            <person name="Ramirez M.A."/>
            <person name="Jimenez-Jacinto V."/>
            <person name="Collado-Vides J."/>
            <person name="Davila G."/>
        </authorList>
    </citation>
    <scope>NUCLEOTIDE SEQUENCE [LARGE SCALE GENOMIC DNA]</scope>
    <source>
        <strain>ATCC 51251 / DSM 11541 / JCM 21823 / NBRC 15573 / CFN 42</strain>
    </source>
</reference>
<gene>
    <name evidence="1" type="primary">fbpC</name>
    <name type="ordered locus">RHE_CH02124</name>
</gene>
<organism>
    <name type="scientific">Rhizobium etli (strain ATCC 51251 / DSM 11541 / JCM 21823 / NBRC 15573 / CFN 42)</name>
    <dbReference type="NCBI Taxonomy" id="347834"/>
    <lineage>
        <taxon>Bacteria</taxon>
        <taxon>Pseudomonadati</taxon>
        <taxon>Pseudomonadota</taxon>
        <taxon>Alphaproteobacteria</taxon>
        <taxon>Hyphomicrobiales</taxon>
        <taxon>Rhizobiaceae</taxon>
        <taxon>Rhizobium/Agrobacterium group</taxon>
        <taxon>Rhizobium</taxon>
    </lineage>
</organism>